<gene>
    <name evidence="1" type="primary">murI3</name>
    <name type="ordered locus">TTE1225</name>
</gene>
<sequence>MWGDKMRYFPIGVFDSGVGGLTVLKRLMEVLPQENYVYFGDTRRVPYGDRSKEEIKAFTKQIMNFLKKKNVKIFVIACNTISAVFEKEGKEIVFNVVEAGVKSAVETTCNKRIGVIGTRRTTEERIYSNKIKEINKSIEVYEVACPELVPLIEKGFYKTESVKRVVIECVKNLKEEKIDTLVLGCTHYPIVIDYIEEALIGENVRIVDPAERLAYDVKEYITRVNMINPNGSGQVQFYLSKMTQSFIEIAKILLEGKINNYNVSIVDITKY</sequence>
<accession>Q8RAJ0</accession>
<evidence type="ECO:0000255" key="1">
    <source>
        <dbReference type="HAMAP-Rule" id="MF_00258"/>
    </source>
</evidence>
<reference key="1">
    <citation type="journal article" date="2002" name="Genome Res.">
        <title>A complete sequence of the T. tengcongensis genome.</title>
        <authorList>
            <person name="Bao Q."/>
            <person name="Tian Y."/>
            <person name="Li W."/>
            <person name="Xu Z."/>
            <person name="Xuan Z."/>
            <person name="Hu S."/>
            <person name="Dong W."/>
            <person name="Yang J."/>
            <person name="Chen Y."/>
            <person name="Xue Y."/>
            <person name="Xu Y."/>
            <person name="Lai X."/>
            <person name="Huang L."/>
            <person name="Dong X."/>
            <person name="Ma Y."/>
            <person name="Ling L."/>
            <person name="Tan H."/>
            <person name="Chen R."/>
            <person name="Wang J."/>
            <person name="Yu J."/>
            <person name="Yang H."/>
        </authorList>
    </citation>
    <scope>NUCLEOTIDE SEQUENCE [LARGE SCALE GENOMIC DNA]</scope>
    <source>
        <strain>DSM 15242 / JCM 11007 / NBRC 100824 / MB4</strain>
    </source>
</reference>
<dbReference type="EC" id="5.1.1.3" evidence="1"/>
<dbReference type="EMBL" id="AE008691">
    <property type="protein sequence ID" value="AAM24454.1"/>
    <property type="molecule type" value="Genomic_DNA"/>
</dbReference>
<dbReference type="SMR" id="Q8RAJ0"/>
<dbReference type="STRING" id="273068.TTE1225"/>
<dbReference type="KEGG" id="tte:TTE1225"/>
<dbReference type="eggNOG" id="COG0796">
    <property type="taxonomic scope" value="Bacteria"/>
</dbReference>
<dbReference type="HOGENOM" id="CLU_052344_0_2_9"/>
<dbReference type="UniPathway" id="UPA00219"/>
<dbReference type="Proteomes" id="UP000000555">
    <property type="component" value="Chromosome"/>
</dbReference>
<dbReference type="GO" id="GO:0008881">
    <property type="term" value="F:glutamate racemase activity"/>
    <property type="evidence" value="ECO:0007669"/>
    <property type="project" value="UniProtKB-UniRule"/>
</dbReference>
<dbReference type="GO" id="GO:0071555">
    <property type="term" value="P:cell wall organization"/>
    <property type="evidence" value="ECO:0007669"/>
    <property type="project" value="UniProtKB-KW"/>
</dbReference>
<dbReference type="GO" id="GO:0009252">
    <property type="term" value="P:peptidoglycan biosynthetic process"/>
    <property type="evidence" value="ECO:0007669"/>
    <property type="project" value="UniProtKB-UniRule"/>
</dbReference>
<dbReference type="GO" id="GO:0008360">
    <property type="term" value="P:regulation of cell shape"/>
    <property type="evidence" value="ECO:0007669"/>
    <property type="project" value="UniProtKB-KW"/>
</dbReference>
<dbReference type="FunFam" id="3.40.50.1860:FF:000001">
    <property type="entry name" value="Glutamate racemase"/>
    <property type="match status" value="1"/>
</dbReference>
<dbReference type="Gene3D" id="3.40.50.1860">
    <property type="match status" value="2"/>
</dbReference>
<dbReference type="HAMAP" id="MF_00258">
    <property type="entry name" value="Glu_racemase"/>
    <property type="match status" value="1"/>
</dbReference>
<dbReference type="InterPro" id="IPR015942">
    <property type="entry name" value="Asp/Glu/hydantoin_racemase"/>
</dbReference>
<dbReference type="InterPro" id="IPR001920">
    <property type="entry name" value="Asp/Glu_race"/>
</dbReference>
<dbReference type="InterPro" id="IPR033134">
    <property type="entry name" value="Asp/Glu_racemase_AS_2"/>
</dbReference>
<dbReference type="InterPro" id="IPR004391">
    <property type="entry name" value="Glu_race"/>
</dbReference>
<dbReference type="NCBIfam" id="TIGR00067">
    <property type="entry name" value="glut_race"/>
    <property type="match status" value="1"/>
</dbReference>
<dbReference type="PANTHER" id="PTHR21198">
    <property type="entry name" value="GLUTAMATE RACEMASE"/>
    <property type="match status" value="1"/>
</dbReference>
<dbReference type="PANTHER" id="PTHR21198:SF2">
    <property type="entry name" value="GLUTAMATE RACEMASE"/>
    <property type="match status" value="1"/>
</dbReference>
<dbReference type="Pfam" id="PF01177">
    <property type="entry name" value="Asp_Glu_race"/>
    <property type="match status" value="1"/>
</dbReference>
<dbReference type="SUPFAM" id="SSF53681">
    <property type="entry name" value="Aspartate/glutamate racemase"/>
    <property type="match status" value="2"/>
</dbReference>
<dbReference type="PROSITE" id="PS00924">
    <property type="entry name" value="ASP_GLU_RACEMASE_2"/>
    <property type="match status" value="1"/>
</dbReference>
<protein>
    <recommendedName>
        <fullName evidence="1">Glutamate racemase 3</fullName>
        <ecNumber evidence="1">5.1.1.3</ecNumber>
    </recommendedName>
</protein>
<name>MURI3_CALS4</name>
<keyword id="KW-0133">Cell shape</keyword>
<keyword id="KW-0961">Cell wall biogenesis/degradation</keyword>
<keyword id="KW-0413">Isomerase</keyword>
<keyword id="KW-0573">Peptidoglycan synthesis</keyword>
<keyword id="KW-1185">Reference proteome</keyword>
<feature type="chain" id="PRO_0000095528" description="Glutamate racemase 3">
    <location>
        <begin position="1"/>
        <end position="271"/>
    </location>
</feature>
<feature type="active site" description="Proton donor/acceptor" evidence="1">
    <location>
        <position position="78"/>
    </location>
</feature>
<feature type="active site" description="Proton donor/acceptor" evidence="1">
    <location>
        <position position="185"/>
    </location>
</feature>
<feature type="binding site" evidence="1">
    <location>
        <begin position="15"/>
        <end position="16"/>
    </location>
    <ligand>
        <name>substrate</name>
    </ligand>
</feature>
<feature type="binding site" evidence="1">
    <location>
        <begin position="47"/>
        <end position="48"/>
    </location>
    <ligand>
        <name>substrate</name>
    </ligand>
</feature>
<feature type="binding site" evidence="1">
    <location>
        <begin position="79"/>
        <end position="80"/>
    </location>
    <ligand>
        <name>substrate</name>
    </ligand>
</feature>
<feature type="binding site" evidence="1">
    <location>
        <begin position="186"/>
        <end position="187"/>
    </location>
    <ligand>
        <name>substrate</name>
    </ligand>
</feature>
<organism>
    <name type="scientific">Caldanaerobacter subterraneus subsp. tengcongensis (strain DSM 15242 / JCM 11007 / NBRC 100824 / MB4)</name>
    <name type="common">Thermoanaerobacter tengcongensis</name>
    <dbReference type="NCBI Taxonomy" id="273068"/>
    <lineage>
        <taxon>Bacteria</taxon>
        <taxon>Bacillati</taxon>
        <taxon>Bacillota</taxon>
        <taxon>Clostridia</taxon>
        <taxon>Thermoanaerobacterales</taxon>
        <taxon>Thermoanaerobacteraceae</taxon>
        <taxon>Caldanaerobacter</taxon>
    </lineage>
</organism>
<proteinExistence type="inferred from homology"/>
<comment type="function">
    <text evidence="1">Provides the (R)-glutamate required for cell wall biosynthesis.</text>
</comment>
<comment type="catalytic activity">
    <reaction evidence="1">
        <text>L-glutamate = D-glutamate</text>
        <dbReference type="Rhea" id="RHEA:12813"/>
        <dbReference type="ChEBI" id="CHEBI:29985"/>
        <dbReference type="ChEBI" id="CHEBI:29986"/>
        <dbReference type="EC" id="5.1.1.3"/>
    </reaction>
</comment>
<comment type="pathway">
    <text evidence="1">Cell wall biogenesis; peptidoglycan biosynthesis.</text>
</comment>
<comment type="similarity">
    <text evidence="1">Belongs to the aspartate/glutamate racemases family.</text>
</comment>